<gene>
    <name evidence="3" type="primary">gvpL</name>
    <name evidence="6" type="ORF">AMK26_13455</name>
</gene>
<proteinExistence type="evidence at transcript level"/>
<comment type="function">
    <text evidence="1 4">Might be involved in nucleating gas vesicle formation. A minor component of the gas vesicle (By similarity). Gas vesicles are hollow, gas filled proteinaceous nanostructures found in some microorganisms. It is not clear what function gas vesicles perform in soil bacteria (Probable).</text>
</comment>
<comment type="subcellular location">
    <subcellularLocation>
        <location evidence="1 5">Gas vesicle</location>
    </subcellularLocation>
</comment>
<comment type="induction">
    <text evidence="2">Gas vesicle production is induced by growth conditions that promote production of secondary metabolites tiancimycin A and B.</text>
</comment>
<comment type="miscellaneous">
    <text evidence="2">This strain probably produces some gas vesicles from the probable gvpO-gvpA-gvpF-gvpG-gvpJ-gvpL-gvpS-gvpK operon; it can be induced to produce more under certain growth conditions.</text>
</comment>
<comment type="similarity">
    <text evidence="4">Belongs to the gas vesicle GvpF/GvpL family.</text>
</comment>
<name>GVPL_STRX0</name>
<dbReference type="EMBL" id="LIYH01000003">
    <property type="protein sequence ID" value="OKK04374.1"/>
    <property type="molecule type" value="Genomic_DNA"/>
</dbReference>
<dbReference type="RefSeq" id="WP_073754887.1">
    <property type="nucleotide sequence ID" value="NZ_LIYH01000003.1"/>
</dbReference>
<dbReference type="SMR" id="A0A1Q5LR34"/>
<dbReference type="STRING" id="1703937.AMK26_13455"/>
<dbReference type="OrthoDB" id="146444at2"/>
<dbReference type="Proteomes" id="UP000186270">
    <property type="component" value="Unassembled WGS sequence"/>
</dbReference>
<dbReference type="GO" id="GO:0031411">
    <property type="term" value="C:gas vesicle"/>
    <property type="evidence" value="ECO:0007669"/>
    <property type="project" value="UniProtKB-SubCell"/>
</dbReference>
<dbReference type="GO" id="GO:0031412">
    <property type="term" value="P:gas vesicle organization"/>
    <property type="evidence" value="ECO:0007669"/>
    <property type="project" value="InterPro"/>
</dbReference>
<dbReference type="InterPro" id="IPR009430">
    <property type="entry name" value="GvpL/GvpF"/>
</dbReference>
<dbReference type="PANTHER" id="PTHR36852">
    <property type="entry name" value="PROTEIN GVPL 2"/>
    <property type="match status" value="1"/>
</dbReference>
<dbReference type="PANTHER" id="PTHR36852:SF1">
    <property type="entry name" value="PROTEIN GVPL 2"/>
    <property type="match status" value="1"/>
</dbReference>
<dbReference type="Pfam" id="PF06386">
    <property type="entry name" value="GvpL_GvpF"/>
    <property type="match status" value="1"/>
</dbReference>
<keyword id="KW-0304">Gas vesicle</keyword>
<keyword id="KW-1185">Reference proteome</keyword>
<sequence>MSTDRLQYVYAVTRPFDGVLPEGAHGIGGEPPRLLRHGDLVAVTGAVPAGDFDEAPLRARLEDLDWLADAARAHDAVISALSTVTCPLPLRLATVCRDDSGVRRLLEDGHDRFVRALERLDGRVEWGVKVYAEPGAAQQQEEEPAAHAREASGRDYLRRRLHARRSRDGDWQRADALCRRLHTELSRCAEAGTVHRPQDARLSGVPGVNVLNAAYLVDRARSQQFVELVDGASEPGVRVELTGPWAPYSFAGIAEEDVHETQEAGR</sequence>
<reference evidence="6" key="1">
    <citation type="journal article" date="2016" name="MBio">
        <title>Strain Prioritization and Genome Mining for Enediyne Natural Products.</title>
        <authorList>
            <person name="Yan X."/>
            <person name="Ge H."/>
            <person name="Huang T."/>
            <person name="Hindra X."/>
            <person name="Yang D."/>
            <person name="Teng Q."/>
            <person name="Crnovcic I."/>
            <person name="Li X."/>
            <person name="Rudolf J.D."/>
            <person name="Lohman J.R."/>
            <person name="Gansemans Y."/>
            <person name="Zhu X."/>
            <person name="Huang Y."/>
            <person name="Zhao L.X."/>
            <person name="Jiang Y."/>
            <person name="Van Nieuwerburgh F."/>
            <person name="Rader C."/>
            <person name="Duan Y."/>
            <person name="Shen B."/>
        </authorList>
    </citation>
    <scope>NUCLEOTIDE SEQUENCE [LARGE SCALE GENOMIC DNA]</scope>
    <source>
        <strain>CB03234</strain>
    </source>
</reference>
<reference key="2">
    <citation type="journal article" date="2019" name="Appl. Microbiol. Biotechnol.">
        <title>Discovery of gas vesicles in Streptomyces sp. CB03234-S and potential effects of gas vesicle gene overexpression on morphological and metabolic changes in streptomycetes.</title>
        <authorList>
            <person name="Huang R."/>
            <person name="Lin J."/>
            <person name="Gao D."/>
            <person name="Zhang F."/>
            <person name="Yi L."/>
            <person name="Huang Y."/>
            <person name="Yan X."/>
            <person name="Duan Y."/>
            <person name="Zhu X."/>
        </authorList>
    </citation>
    <scope>INDUCTION</scope>
    <scope>PROBABLE GAS VESICLE FORMATION</scope>
    <source>
        <strain>CB03234</strain>
    </source>
</reference>
<accession>A0A1Q5LR34</accession>
<organism>
    <name type="scientific">Streptomyces sp. (strain CB03234)</name>
    <dbReference type="NCBI Taxonomy" id="1703937"/>
    <lineage>
        <taxon>Bacteria</taxon>
        <taxon>Bacillati</taxon>
        <taxon>Actinomycetota</taxon>
        <taxon>Actinomycetes</taxon>
        <taxon>Kitasatosporales</taxon>
        <taxon>Streptomycetaceae</taxon>
        <taxon>Streptomyces</taxon>
    </lineage>
</organism>
<evidence type="ECO:0000250" key="1">
    <source>
        <dbReference type="UniProtKB" id="Q9HI27"/>
    </source>
</evidence>
<evidence type="ECO:0000269" key="2">
    <source>
    </source>
</evidence>
<evidence type="ECO:0000303" key="3">
    <source>
    </source>
</evidence>
<evidence type="ECO:0000305" key="4"/>
<evidence type="ECO:0000305" key="5">
    <source>
    </source>
</evidence>
<evidence type="ECO:0000312" key="6">
    <source>
        <dbReference type="EMBL" id="OKK04374.1"/>
    </source>
</evidence>
<feature type="chain" id="PRO_0000458448" description="Gas vesicle protein L">
    <location>
        <begin position="1"/>
        <end position="266"/>
    </location>
</feature>
<protein>
    <recommendedName>
        <fullName evidence="3">Gas vesicle protein L</fullName>
    </recommendedName>
</protein>